<comment type="subunit">
    <text evidence="1">Part of the 50S ribosomal subunit.</text>
</comment>
<comment type="subcellular location">
    <subcellularLocation>
        <location>Plastid</location>
        <location>Chloroplast</location>
    </subcellularLocation>
</comment>
<comment type="similarity">
    <text evidence="4">Belongs to the universal ribosomal protein uL2 family.</text>
</comment>
<evidence type="ECO:0000250" key="1"/>
<evidence type="ECO:0000255" key="2">
    <source>
        <dbReference type="HAMAP-Rule" id="MF_01320"/>
    </source>
</evidence>
<evidence type="ECO:0000256" key="3">
    <source>
        <dbReference type="SAM" id="MobiDB-lite"/>
    </source>
</evidence>
<evidence type="ECO:0000305" key="4"/>
<protein>
    <recommendedName>
        <fullName evidence="2">Large ribosomal subunit protein uL2cz/uL2cy</fullName>
    </recommendedName>
    <alternativeName>
        <fullName evidence="4">50S ribosomal protein L2, chloroplastic</fullName>
    </alternativeName>
</protein>
<keyword id="KW-0150">Chloroplast</keyword>
<keyword id="KW-0934">Plastid</keyword>
<keyword id="KW-0687">Ribonucleoprotein</keyword>
<keyword id="KW-0689">Ribosomal protein</keyword>
<accession>Q6EVY5</accession>
<feature type="chain" id="PRO_0000129686" description="Large ribosomal subunit protein uL2cz/uL2cy">
    <location>
        <begin position="1"/>
        <end position="273"/>
    </location>
</feature>
<feature type="region of interest" description="Disordered" evidence="3">
    <location>
        <begin position="1"/>
        <end position="24"/>
    </location>
</feature>
<feature type="region of interest" description="Disordered" evidence="3">
    <location>
        <begin position="224"/>
        <end position="254"/>
    </location>
</feature>
<organism>
    <name type="scientific">Nymphaea alba</name>
    <name type="common">White water-lily</name>
    <name type="synonym">Castalia alba</name>
    <dbReference type="NCBI Taxonomy" id="34301"/>
    <lineage>
        <taxon>Eukaryota</taxon>
        <taxon>Viridiplantae</taxon>
        <taxon>Streptophyta</taxon>
        <taxon>Embryophyta</taxon>
        <taxon>Tracheophyta</taxon>
        <taxon>Spermatophyta</taxon>
        <taxon>Magnoliopsida</taxon>
        <taxon>Nymphaeales</taxon>
        <taxon>Nymphaeaceae</taxon>
        <taxon>Nymphaea</taxon>
    </lineage>
</organism>
<dbReference type="EMBL" id="AJ627251">
    <property type="protein sequence ID" value="CAF28661.1"/>
    <property type="molecule type" value="Genomic_DNA"/>
</dbReference>
<dbReference type="EMBL" id="AJ627251">
    <property type="protein sequence ID" value="CAF28636.1"/>
    <property type="molecule type" value="Genomic_DNA"/>
</dbReference>
<dbReference type="SMR" id="Q6EVY5"/>
<dbReference type="GO" id="GO:0009507">
    <property type="term" value="C:chloroplast"/>
    <property type="evidence" value="ECO:0007669"/>
    <property type="project" value="UniProtKB-SubCell"/>
</dbReference>
<dbReference type="GO" id="GO:0005762">
    <property type="term" value="C:mitochondrial large ribosomal subunit"/>
    <property type="evidence" value="ECO:0007669"/>
    <property type="project" value="TreeGrafter"/>
</dbReference>
<dbReference type="GO" id="GO:0019843">
    <property type="term" value="F:rRNA binding"/>
    <property type="evidence" value="ECO:0007669"/>
    <property type="project" value="UniProtKB-UniRule"/>
</dbReference>
<dbReference type="GO" id="GO:0003735">
    <property type="term" value="F:structural constituent of ribosome"/>
    <property type="evidence" value="ECO:0007669"/>
    <property type="project" value="InterPro"/>
</dbReference>
<dbReference type="GO" id="GO:0016740">
    <property type="term" value="F:transferase activity"/>
    <property type="evidence" value="ECO:0007669"/>
    <property type="project" value="InterPro"/>
</dbReference>
<dbReference type="GO" id="GO:0032543">
    <property type="term" value="P:mitochondrial translation"/>
    <property type="evidence" value="ECO:0007669"/>
    <property type="project" value="TreeGrafter"/>
</dbReference>
<dbReference type="FunFam" id="4.10.950.10:FF:000001">
    <property type="entry name" value="50S ribosomal protein L2"/>
    <property type="match status" value="1"/>
</dbReference>
<dbReference type="FunFam" id="2.30.30.30:FF:000008">
    <property type="entry name" value="50S ribosomal protein L2, chloroplastic"/>
    <property type="match status" value="1"/>
</dbReference>
<dbReference type="FunFam" id="2.40.50.140:FF:000029">
    <property type="entry name" value="50S ribosomal protein L2, chloroplastic"/>
    <property type="match status" value="1"/>
</dbReference>
<dbReference type="Gene3D" id="2.30.30.30">
    <property type="match status" value="1"/>
</dbReference>
<dbReference type="Gene3D" id="2.40.50.140">
    <property type="entry name" value="Nucleic acid-binding proteins"/>
    <property type="match status" value="1"/>
</dbReference>
<dbReference type="Gene3D" id="4.10.950.10">
    <property type="entry name" value="Ribosomal protein L2, domain 3"/>
    <property type="match status" value="1"/>
</dbReference>
<dbReference type="HAMAP" id="MF_01320_B">
    <property type="entry name" value="Ribosomal_uL2_B"/>
    <property type="match status" value="1"/>
</dbReference>
<dbReference type="InterPro" id="IPR012340">
    <property type="entry name" value="NA-bd_OB-fold"/>
</dbReference>
<dbReference type="InterPro" id="IPR014722">
    <property type="entry name" value="Rib_uL2_dom2"/>
</dbReference>
<dbReference type="InterPro" id="IPR002171">
    <property type="entry name" value="Ribosomal_uL2"/>
</dbReference>
<dbReference type="InterPro" id="IPR005880">
    <property type="entry name" value="Ribosomal_uL2_bac/org-type"/>
</dbReference>
<dbReference type="InterPro" id="IPR022669">
    <property type="entry name" value="Ribosomal_uL2_C"/>
</dbReference>
<dbReference type="InterPro" id="IPR022671">
    <property type="entry name" value="Ribosomal_uL2_CS"/>
</dbReference>
<dbReference type="InterPro" id="IPR014726">
    <property type="entry name" value="Ribosomal_uL2_dom3"/>
</dbReference>
<dbReference type="InterPro" id="IPR022666">
    <property type="entry name" value="Ribosomal_uL2_RNA-bd_dom"/>
</dbReference>
<dbReference type="InterPro" id="IPR008991">
    <property type="entry name" value="Translation_prot_SH3-like_sf"/>
</dbReference>
<dbReference type="NCBIfam" id="TIGR01171">
    <property type="entry name" value="rplB_bact"/>
    <property type="match status" value="1"/>
</dbReference>
<dbReference type="PANTHER" id="PTHR13691:SF5">
    <property type="entry name" value="LARGE RIBOSOMAL SUBUNIT PROTEIN UL2M"/>
    <property type="match status" value="1"/>
</dbReference>
<dbReference type="PANTHER" id="PTHR13691">
    <property type="entry name" value="RIBOSOMAL PROTEIN L2"/>
    <property type="match status" value="1"/>
</dbReference>
<dbReference type="Pfam" id="PF00181">
    <property type="entry name" value="Ribosomal_L2"/>
    <property type="match status" value="1"/>
</dbReference>
<dbReference type="Pfam" id="PF03947">
    <property type="entry name" value="Ribosomal_L2_C"/>
    <property type="match status" value="1"/>
</dbReference>
<dbReference type="PIRSF" id="PIRSF002158">
    <property type="entry name" value="Ribosomal_L2"/>
    <property type="match status" value="1"/>
</dbReference>
<dbReference type="SMART" id="SM01383">
    <property type="entry name" value="Ribosomal_L2"/>
    <property type="match status" value="1"/>
</dbReference>
<dbReference type="SMART" id="SM01382">
    <property type="entry name" value="Ribosomal_L2_C"/>
    <property type="match status" value="1"/>
</dbReference>
<dbReference type="SUPFAM" id="SSF50249">
    <property type="entry name" value="Nucleic acid-binding proteins"/>
    <property type="match status" value="1"/>
</dbReference>
<dbReference type="SUPFAM" id="SSF50104">
    <property type="entry name" value="Translation proteins SH3-like domain"/>
    <property type="match status" value="1"/>
</dbReference>
<dbReference type="PROSITE" id="PS00467">
    <property type="entry name" value="RIBOSOMAL_L2"/>
    <property type="match status" value="1"/>
</dbReference>
<sequence length="273" mass="29762">MAIHLYKTSTPSTRKGAVDSQAKSNPRTKLIYGQHRCGKGRNARGIITARHRGGGHKRLYRKIDFRRNEKDISGRIVTIEYDPNRNAYICLIHYGDGEKRYILHPRGAIIGDTIVSGTEVPISMGNALPLTDMPLGTAIHNIEITLGKGGQLARAAGAVAKLIAKEGKSATLRLPSGEVRLISKNCSATVGQVGNVGANQKSLGRAGSKCWLGKRPVVRGVVMNPVDHPHGGGEGRAPIGRKKPTTPWGYPALGRRSRKRNKYSDIFILRRRK</sequence>
<geneLocation type="chloroplast"/>
<gene>
    <name type="primary">rpl2-A</name>
</gene>
<gene>
    <name type="primary">rpl2-B</name>
</gene>
<reference key="1">
    <citation type="journal article" date="2004" name="Mol. Biol. Evol.">
        <title>The chloroplast genome of Nymphaea alba: whole-genome analyses and the problem of identifying the most basal angiosperm.</title>
        <authorList>
            <person name="Goremykin V.V."/>
            <person name="Hirsch-Ernst K.I."/>
            <person name="Woelfl S."/>
            <person name="Hellwig F.H."/>
        </authorList>
    </citation>
    <scope>NUCLEOTIDE SEQUENCE [LARGE SCALE GENOMIC DNA]</scope>
</reference>
<proteinExistence type="inferred from homology"/>
<name>RK2_NYMAL</name>